<dbReference type="EC" id="2.6.1.9" evidence="1"/>
<dbReference type="EMBL" id="CP000822">
    <property type="protein sequence ID" value="ABV11916.1"/>
    <property type="molecule type" value="Genomic_DNA"/>
</dbReference>
<dbReference type="RefSeq" id="WP_012131739.1">
    <property type="nucleotide sequence ID" value="NC_009792.1"/>
</dbReference>
<dbReference type="SMR" id="A8AEK3"/>
<dbReference type="STRING" id="290338.CKO_00764"/>
<dbReference type="GeneID" id="45134966"/>
<dbReference type="KEGG" id="cko:CKO_00764"/>
<dbReference type="HOGENOM" id="CLU_017584_3_1_6"/>
<dbReference type="OrthoDB" id="9813612at2"/>
<dbReference type="UniPathway" id="UPA00031">
    <property type="reaction ID" value="UER00012"/>
</dbReference>
<dbReference type="Proteomes" id="UP000008148">
    <property type="component" value="Chromosome"/>
</dbReference>
<dbReference type="GO" id="GO:0004400">
    <property type="term" value="F:histidinol-phosphate transaminase activity"/>
    <property type="evidence" value="ECO:0007669"/>
    <property type="project" value="UniProtKB-UniRule"/>
</dbReference>
<dbReference type="GO" id="GO:0030170">
    <property type="term" value="F:pyridoxal phosphate binding"/>
    <property type="evidence" value="ECO:0007669"/>
    <property type="project" value="InterPro"/>
</dbReference>
<dbReference type="GO" id="GO:0000105">
    <property type="term" value="P:L-histidine biosynthetic process"/>
    <property type="evidence" value="ECO:0007669"/>
    <property type="project" value="UniProtKB-UniRule"/>
</dbReference>
<dbReference type="CDD" id="cd00609">
    <property type="entry name" value="AAT_like"/>
    <property type="match status" value="1"/>
</dbReference>
<dbReference type="FunFam" id="3.40.640.10:FF:000032">
    <property type="entry name" value="Histidinol-phosphate aminotransferase"/>
    <property type="match status" value="1"/>
</dbReference>
<dbReference type="FunFam" id="3.90.1150.10:FF:000042">
    <property type="entry name" value="Histidinol-phosphate aminotransferase"/>
    <property type="match status" value="1"/>
</dbReference>
<dbReference type="Gene3D" id="3.90.1150.10">
    <property type="entry name" value="Aspartate Aminotransferase, domain 1"/>
    <property type="match status" value="1"/>
</dbReference>
<dbReference type="Gene3D" id="3.40.640.10">
    <property type="entry name" value="Type I PLP-dependent aspartate aminotransferase-like (Major domain)"/>
    <property type="match status" value="1"/>
</dbReference>
<dbReference type="HAMAP" id="MF_01023">
    <property type="entry name" value="HisC_aminotrans_2"/>
    <property type="match status" value="1"/>
</dbReference>
<dbReference type="InterPro" id="IPR001917">
    <property type="entry name" value="Aminotrans_II_pyridoxalP_BS"/>
</dbReference>
<dbReference type="InterPro" id="IPR004839">
    <property type="entry name" value="Aminotransferase_I/II_large"/>
</dbReference>
<dbReference type="InterPro" id="IPR005861">
    <property type="entry name" value="HisP_aminotrans"/>
</dbReference>
<dbReference type="InterPro" id="IPR015424">
    <property type="entry name" value="PyrdxlP-dep_Trfase"/>
</dbReference>
<dbReference type="InterPro" id="IPR015421">
    <property type="entry name" value="PyrdxlP-dep_Trfase_major"/>
</dbReference>
<dbReference type="InterPro" id="IPR015422">
    <property type="entry name" value="PyrdxlP-dep_Trfase_small"/>
</dbReference>
<dbReference type="NCBIfam" id="TIGR01141">
    <property type="entry name" value="hisC"/>
    <property type="match status" value="1"/>
</dbReference>
<dbReference type="PANTHER" id="PTHR42885:SF2">
    <property type="entry name" value="HISTIDINOL-PHOSPHATE AMINOTRANSFERASE"/>
    <property type="match status" value="1"/>
</dbReference>
<dbReference type="PANTHER" id="PTHR42885">
    <property type="entry name" value="HISTIDINOL-PHOSPHATE AMINOTRANSFERASE-RELATED"/>
    <property type="match status" value="1"/>
</dbReference>
<dbReference type="Pfam" id="PF00155">
    <property type="entry name" value="Aminotran_1_2"/>
    <property type="match status" value="1"/>
</dbReference>
<dbReference type="SUPFAM" id="SSF53383">
    <property type="entry name" value="PLP-dependent transferases"/>
    <property type="match status" value="1"/>
</dbReference>
<dbReference type="PROSITE" id="PS00599">
    <property type="entry name" value="AA_TRANSFER_CLASS_2"/>
    <property type="match status" value="1"/>
</dbReference>
<keyword id="KW-0028">Amino-acid biosynthesis</keyword>
<keyword id="KW-0032">Aminotransferase</keyword>
<keyword id="KW-0368">Histidine biosynthesis</keyword>
<keyword id="KW-0663">Pyridoxal phosphate</keyword>
<keyword id="KW-1185">Reference proteome</keyword>
<keyword id="KW-0808">Transferase</keyword>
<accession>A8AEK3</accession>
<feature type="chain" id="PRO_1000063470" description="Histidinol-phosphate aminotransferase">
    <location>
        <begin position="1"/>
        <end position="359"/>
    </location>
</feature>
<feature type="modified residue" description="N6-(pyridoxal phosphate)lysine" evidence="1">
    <location>
        <position position="217"/>
    </location>
</feature>
<gene>
    <name evidence="1" type="primary">hisC</name>
    <name type="ordered locus">CKO_00764</name>
</gene>
<proteinExistence type="inferred from homology"/>
<sequence length="359" mass="39777">MSTENTRSVTDLARENVRNLTPYQSARRLGGNGDVWLNANEFPTTVEFQLTQQTLNRYPECQPKAVIENYAQYAGVNPGQVLVSRGADEGIELLIRAFCEPGKEAILYCPPTYGMYSVSSETIGVECRTVPTLENWQLDLRGIADKLDGVKVMFVCSPNNPTGQLINPQDLRTLLEMTRGNAIVVADEAYIEFCPQATLAGWLSEYPHLVVLRTLSKAFALAGLRCGFTLANEEVINLLLKVIAPYPLSTPVADIAAQALTPQGVNAMRERVAQILLERQYLVNALKEIACVEQVFDSETNYILARFTASSSVFKSLWDQGIILRDQNKQPSLSGCLRITVGTREESQRVIDALRAEQV</sequence>
<organism>
    <name type="scientific">Citrobacter koseri (strain ATCC BAA-895 / CDC 4225-83 / SGSC4696)</name>
    <dbReference type="NCBI Taxonomy" id="290338"/>
    <lineage>
        <taxon>Bacteria</taxon>
        <taxon>Pseudomonadati</taxon>
        <taxon>Pseudomonadota</taxon>
        <taxon>Gammaproteobacteria</taxon>
        <taxon>Enterobacterales</taxon>
        <taxon>Enterobacteriaceae</taxon>
        <taxon>Citrobacter</taxon>
    </lineage>
</organism>
<protein>
    <recommendedName>
        <fullName evidence="1">Histidinol-phosphate aminotransferase</fullName>
        <ecNumber evidence="1">2.6.1.9</ecNumber>
    </recommendedName>
    <alternativeName>
        <fullName evidence="1">Imidazole acetol-phosphate transaminase</fullName>
    </alternativeName>
</protein>
<evidence type="ECO:0000255" key="1">
    <source>
        <dbReference type="HAMAP-Rule" id="MF_01023"/>
    </source>
</evidence>
<reference key="1">
    <citation type="submission" date="2007-08" db="EMBL/GenBank/DDBJ databases">
        <authorList>
            <consortium name="The Citrobacter koseri Genome Sequencing Project"/>
            <person name="McClelland M."/>
            <person name="Sanderson E.K."/>
            <person name="Porwollik S."/>
            <person name="Spieth J."/>
            <person name="Clifton W.S."/>
            <person name="Latreille P."/>
            <person name="Courtney L."/>
            <person name="Wang C."/>
            <person name="Pepin K."/>
            <person name="Bhonagiri V."/>
            <person name="Nash W."/>
            <person name="Johnson M."/>
            <person name="Thiruvilangam P."/>
            <person name="Wilson R."/>
        </authorList>
    </citation>
    <scope>NUCLEOTIDE SEQUENCE [LARGE SCALE GENOMIC DNA]</scope>
    <source>
        <strain>ATCC BAA-895 / CDC 4225-83 / SGSC4696</strain>
    </source>
</reference>
<name>HIS8_CITK8</name>
<comment type="catalytic activity">
    <reaction evidence="1">
        <text>L-histidinol phosphate + 2-oxoglutarate = 3-(imidazol-4-yl)-2-oxopropyl phosphate + L-glutamate</text>
        <dbReference type="Rhea" id="RHEA:23744"/>
        <dbReference type="ChEBI" id="CHEBI:16810"/>
        <dbReference type="ChEBI" id="CHEBI:29985"/>
        <dbReference type="ChEBI" id="CHEBI:57766"/>
        <dbReference type="ChEBI" id="CHEBI:57980"/>
        <dbReference type="EC" id="2.6.1.9"/>
    </reaction>
</comment>
<comment type="cofactor">
    <cofactor evidence="1">
        <name>pyridoxal 5'-phosphate</name>
        <dbReference type="ChEBI" id="CHEBI:597326"/>
    </cofactor>
</comment>
<comment type="pathway">
    <text evidence="1">Amino-acid biosynthesis; L-histidine biosynthesis; L-histidine from 5-phospho-alpha-D-ribose 1-diphosphate: step 7/9.</text>
</comment>
<comment type="subunit">
    <text evidence="1">Homodimer.</text>
</comment>
<comment type="similarity">
    <text evidence="1">Belongs to the class-II pyridoxal-phosphate-dependent aminotransferase family. Histidinol-phosphate aminotransferase subfamily.</text>
</comment>